<sequence length="70" mass="7967">QTWPPVEDRPHCKRCVACTLMWPPEANRCVCGDLVPKCHKGCSQCEKADTRSGRPLYKCLSFEYYNCAAD</sequence>
<dbReference type="GO" id="GO:0005576">
    <property type="term" value="C:extracellular region"/>
    <property type="evidence" value="ECO:0007669"/>
    <property type="project" value="InterPro"/>
</dbReference>
<dbReference type="GO" id="GO:0004867">
    <property type="term" value="F:serine-type endopeptidase inhibitor activity"/>
    <property type="evidence" value="ECO:0000314"/>
    <property type="project" value="UniProtKB"/>
</dbReference>
<dbReference type="GO" id="GO:0010951">
    <property type="term" value="P:negative regulation of endopeptidase activity"/>
    <property type="evidence" value="ECO:0000314"/>
    <property type="project" value="UniProtKB"/>
</dbReference>
<dbReference type="Gene3D" id="2.10.69.10">
    <property type="entry name" value="Cysteine Protease (Bromelain) Inhibitor, subunit H"/>
    <property type="match status" value="1"/>
</dbReference>
<dbReference type="InterPro" id="IPR035995">
    <property type="entry name" value="Bowman-Birk_prot_inh"/>
</dbReference>
<dbReference type="InterPro" id="IPR000877">
    <property type="entry name" value="Prot_inh_BBI"/>
</dbReference>
<dbReference type="SMART" id="SM00269">
    <property type="entry name" value="BowB"/>
    <property type="match status" value="1"/>
</dbReference>
<dbReference type="SUPFAM" id="SSF57247">
    <property type="entry name" value="Bowman-Birk inhibitor, BBI"/>
    <property type="match status" value="1"/>
</dbReference>
<feature type="chain" id="PRO_0000452978" description="Bowman-Birk type proteinase inhibitor A7">
    <location>
        <begin position="1"/>
        <end position="70"/>
    </location>
</feature>
<feature type="site" description="Reactive bond for trypsin" evidence="1">
    <location>
        <begin position="20"/>
        <end position="21"/>
    </location>
</feature>
<feature type="disulfide bond" evidence="1">
    <location>
        <begin position="12"/>
        <end position="31"/>
    </location>
</feature>
<feature type="disulfide bond" evidence="1">
    <location>
        <begin position="18"/>
        <end position="29"/>
    </location>
</feature>
<feature type="disulfide bond" evidence="1">
    <location>
        <begin position="38"/>
        <end position="45"/>
    </location>
</feature>
<feature type="disulfide bond" evidence="1">
    <location>
        <begin position="42"/>
        <end position="59"/>
    </location>
</feature>
<accession>C0HLS8</accession>
<comment type="function">
    <text evidence="2">Serine protease inhibitor (PubMed:33666645). Strongly inhibits trypsin (Ki = 7.1 nM) and almost completely inhibits elastase (PubMed:33666645). Also inhibits chymotrypsin (Ki = 19 nM) (PubMed:33666645). Does not inhibit bacterial subtilisin (PubMed:33666645).</text>
</comment>
<comment type="tissue specificity">
    <text evidence="2">Expressed in bulb (at protein level).</text>
</comment>
<comment type="similarity">
    <text evidence="4">Belongs to the Bowman-Birk serine protease inhibitor family.</text>
</comment>
<organism>
    <name type="scientific">Hyacinthus orientalis</name>
    <name type="common">Common hyacinth</name>
    <dbReference type="NCBI Taxonomy" id="82025"/>
    <lineage>
        <taxon>Eukaryota</taxon>
        <taxon>Viridiplantae</taxon>
        <taxon>Streptophyta</taxon>
        <taxon>Embryophyta</taxon>
        <taxon>Tracheophyta</taxon>
        <taxon>Spermatophyta</taxon>
        <taxon>Magnoliopsida</taxon>
        <taxon>Liliopsida</taxon>
        <taxon>Asparagales</taxon>
        <taxon>Hyacinthaceae</taxon>
        <taxon>Hyacinthoideae</taxon>
        <taxon>Hyacintheae</taxon>
        <taxon>Hyacinthus</taxon>
    </lineage>
</organism>
<proteinExistence type="evidence at protein level"/>
<reference key="1">
    <citation type="journal article" date="2021" name="Biochem. J.">
        <title>Isolation and functional diversity of Bowman-Birk type serine proteinase inhibitors from Hyacinthus orientalis.</title>
        <authorList>
            <person name="Aoki-Shioi N."/>
            <person name="Terada S."/>
            <person name="Hellinger R."/>
            <person name="Furuta Y."/>
            <person name="Gruber C.W."/>
        </authorList>
    </citation>
    <scope>PROTEIN SEQUENCE</scope>
    <scope>FUNCTION</scope>
    <scope>TISSUE SPECIFICITY</scope>
    <source>
        <tissue evidence="3">Bulb</tissue>
    </source>
</reference>
<keyword id="KW-0903">Direct protein sequencing</keyword>
<keyword id="KW-1015">Disulfide bond</keyword>
<keyword id="KW-0646">Protease inhibitor</keyword>
<keyword id="KW-0722">Serine protease inhibitor</keyword>
<name>IBBA7_HYAOR</name>
<evidence type="ECO:0000250" key="1">
    <source>
        <dbReference type="UniProtKB" id="P80321"/>
    </source>
</evidence>
<evidence type="ECO:0000269" key="2">
    <source>
    </source>
</evidence>
<evidence type="ECO:0000303" key="3">
    <source>
    </source>
</evidence>
<evidence type="ECO:0000305" key="4"/>
<protein>
    <recommendedName>
        <fullName evidence="3">Bowman-Birk type proteinase inhibitor A7</fullName>
        <shortName evidence="3">HOSPI-A7</shortName>
    </recommendedName>
</protein>